<accession>Q9D1H9</accession>
<accession>Q5NCN1</accession>
<name>MFAP4_MOUSE</name>
<gene>
    <name type="primary">Mfap4</name>
</gene>
<organism>
    <name type="scientific">Mus musculus</name>
    <name type="common">Mouse</name>
    <dbReference type="NCBI Taxonomy" id="10090"/>
    <lineage>
        <taxon>Eukaryota</taxon>
        <taxon>Metazoa</taxon>
        <taxon>Chordata</taxon>
        <taxon>Craniata</taxon>
        <taxon>Vertebrata</taxon>
        <taxon>Euteleostomi</taxon>
        <taxon>Mammalia</taxon>
        <taxon>Eutheria</taxon>
        <taxon>Euarchontoglires</taxon>
        <taxon>Glires</taxon>
        <taxon>Rodentia</taxon>
        <taxon>Myomorpha</taxon>
        <taxon>Muroidea</taxon>
        <taxon>Muridae</taxon>
        <taxon>Murinae</taxon>
        <taxon>Mus</taxon>
        <taxon>Mus</taxon>
    </lineage>
</organism>
<protein>
    <recommendedName>
        <fullName>Microfibril-associated glycoprotein 4</fullName>
    </recommendedName>
</protein>
<feature type="signal peptide" evidence="2">
    <location>
        <begin position="1"/>
        <end position="22"/>
    </location>
</feature>
<feature type="chain" id="PRO_0000009135" description="Microfibril-associated glycoprotein 4">
    <location>
        <begin position="23"/>
        <end position="257"/>
    </location>
</feature>
<feature type="domain" description="Fibrinogen C-terminal" evidence="3">
    <location>
        <begin position="34"/>
        <end position="257"/>
    </location>
</feature>
<feature type="short sequence motif" description="Cell attachment site" evidence="2">
    <location>
        <begin position="28"/>
        <end position="30"/>
    </location>
</feature>
<feature type="glycosylation site" description="N-linked (GlcNAc...) asparagine" evidence="2">
    <location>
        <position position="89"/>
    </location>
</feature>
<feature type="glycosylation site" description="N-linked (GlcNAc...) asparagine" evidence="4">
    <location>
        <position position="139"/>
    </location>
</feature>
<feature type="splice variant" id="VSP_013482" description="In isoform 2." evidence="5">
    <original>G</original>
    <variation>GKVGPWGGGCPSAKSLLTGCHPSLG</variation>
    <location>
        <position position="115"/>
    </location>
</feature>
<proteinExistence type="evidence at protein level"/>
<reference key="1">
    <citation type="journal article" date="2005" name="Science">
        <title>The transcriptional landscape of the mammalian genome.</title>
        <authorList>
            <person name="Carninci P."/>
            <person name="Kasukawa T."/>
            <person name="Katayama S."/>
            <person name="Gough J."/>
            <person name="Frith M.C."/>
            <person name="Maeda N."/>
            <person name="Oyama R."/>
            <person name="Ravasi T."/>
            <person name="Lenhard B."/>
            <person name="Wells C."/>
            <person name="Kodzius R."/>
            <person name="Shimokawa K."/>
            <person name="Bajic V.B."/>
            <person name="Brenner S.E."/>
            <person name="Batalov S."/>
            <person name="Forrest A.R."/>
            <person name="Zavolan M."/>
            <person name="Davis M.J."/>
            <person name="Wilming L.G."/>
            <person name="Aidinis V."/>
            <person name="Allen J.E."/>
            <person name="Ambesi-Impiombato A."/>
            <person name="Apweiler R."/>
            <person name="Aturaliya R.N."/>
            <person name="Bailey T.L."/>
            <person name="Bansal M."/>
            <person name="Baxter L."/>
            <person name="Beisel K.W."/>
            <person name="Bersano T."/>
            <person name="Bono H."/>
            <person name="Chalk A.M."/>
            <person name="Chiu K.P."/>
            <person name="Choudhary V."/>
            <person name="Christoffels A."/>
            <person name="Clutterbuck D.R."/>
            <person name="Crowe M.L."/>
            <person name="Dalla E."/>
            <person name="Dalrymple B.P."/>
            <person name="de Bono B."/>
            <person name="Della Gatta G."/>
            <person name="di Bernardo D."/>
            <person name="Down T."/>
            <person name="Engstrom P."/>
            <person name="Fagiolini M."/>
            <person name="Faulkner G."/>
            <person name="Fletcher C.F."/>
            <person name="Fukushima T."/>
            <person name="Furuno M."/>
            <person name="Futaki S."/>
            <person name="Gariboldi M."/>
            <person name="Georgii-Hemming P."/>
            <person name="Gingeras T.R."/>
            <person name="Gojobori T."/>
            <person name="Green R.E."/>
            <person name="Gustincich S."/>
            <person name="Harbers M."/>
            <person name="Hayashi Y."/>
            <person name="Hensch T.K."/>
            <person name="Hirokawa N."/>
            <person name="Hill D."/>
            <person name="Huminiecki L."/>
            <person name="Iacono M."/>
            <person name="Ikeo K."/>
            <person name="Iwama A."/>
            <person name="Ishikawa T."/>
            <person name="Jakt M."/>
            <person name="Kanapin A."/>
            <person name="Katoh M."/>
            <person name="Kawasawa Y."/>
            <person name="Kelso J."/>
            <person name="Kitamura H."/>
            <person name="Kitano H."/>
            <person name="Kollias G."/>
            <person name="Krishnan S.P."/>
            <person name="Kruger A."/>
            <person name="Kummerfeld S.K."/>
            <person name="Kurochkin I.V."/>
            <person name="Lareau L.F."/>
            <person name="Lazarevic D."/>
            <person name="Lipovich L."/>
            <person name="Liu J."/>
            <person name="Liuni S."/>
            <person name="McWilliam S."/>
            <person name="Madan Babu M."/>
            <person name="Madera M."/>
            <person name="Marchionni L."/>
            <person name="Matsuda H."/>
            <person name="Matsuzawa S."/>
            <person name="Miki H."/>
            <person name="Mignone F."/>
            <person name="Miyake S."/>
            <person name="Morris K."/>
            <person name="Mottagui-Tabar S."/>
            <person name="Mulder N."/>
            <person name="Nakano N."/>
            <person name="Nakauchi H."/>
            <person name="Ng P."/>
            <person name="Nilsson R."/>
            <person name="Nishiguchi S."/>
            <person name="Nishikawa S."/>
            <person name="Nori F."/>
            <person name="Ohara O."/>
            <person name="Okazaki Y."/>
            <person name="Orlando V."/>
            <person name="Pang K.C."/>
            <person name="Pavan W.J."/>
            <person name="Pavesi G."/>
            <person name="Pesole G."/>
            <person name="Petrovsky N."/>
            <person name="Piazza S."/>
            <person name="Reed J."/>
            <person name="Reid J.F."/>
            <person name="Ring B.Z."/>
            <person name="Ringwald M."/>
            <person name="Rost B."/>
            <person name="Ruan Y."/>
            <person name="Salzberg S.L."/>
            <person name="Sandelin A."/>
            <person name="Schneider C."/>
            <person name="Schoenbach C."/>
            <person name="Sekiguchi K."/>
            <person name="Semple C.A."/>
            <person name="Seno S."/>
            <person name="Sessa L."/>
            <person name="Sheng Y."/>
            <person name="Shibata Y."/>
            <person name="Shimada H."/>
            <person name="Shimada K."/>
            <person name="Silva D."/>
            <person name="Sinclair B."/>
            <person name="Sperling S."/>
            <person name="Stupka E."/>
            <person name="Sugiura K."/>
            <person name="Sultana R."/>
            <person name="Takenaka Y."/>
            <person name="Taki K."/>
            <person name="Tammoja K."/>
            <person name="Tan S.L."/>
            <person name="Tang S."/>
            <person name="Taylor M.S."/>
            <person name="Tegner J."/>
            <person name="Teichmann S.A."/>
            <person name="Ueda H.R."/>
            <person name="van Nimwegen E."/>
            <person name="Verardo R."/>
            <person name="Wei C.L."/>
            <person name="Yagi K."/>
            <person name="Yamanishi H."/>
            <person name="Zabarovsky E."/>
            <person name="Zhu S."/>
            <person name="Zimmer A."/>
            <person name="Hide W."/>
            <person name="Bult C."/>
            <person name="Grimmond S.M."/>
            <person name="Teasdale R.D."/>
            <person name="Liu E.T."/>
            <person name="Brusic V."/>
            <person name="Quackenbush J."/>
            <person name="Wahlestedt C."/>
            <person name="Mattick J.S."/>
            <person name="Hume D.A."/>
            <person name="Kai C."/>
            <person name="Sasaki D."/>
            <person name="Tomaru Y."/>
            <person name="Fukuda S."/>
            <person name="Kanamori-Katayama M."/>
            <person name="Suzuki M."/>
            <person name="Aoki J."/>
            <person name="Arakawa T."/>
            <person name="Iida J."/>
            <person name="Imamura K."/>
            <person name="Itoh M."/>
            <person name="Kato T."/>
            <person name="Kawaji H."/>
            <person name="Kawagashira N."/>
            <person name="Kawashima T."/>
            <person name="Kojima M."/>
            <person name="Kondo S."/>
            <person name="Konno H."/>
            <person name="Nakano K."/>
            <person name="Ninomiya N."/>
            <person name="Nishio T."/>
            <person name="Okada M."/>
            <person name="Plessy C."/>
            <person name="Shibata K."/>
            <person name="Shiraki T."/>
            <person name="Suzuki S."/>
            <person name="Tagami M."/>
            <person name="Waki K."/>
            <person name="Watahiki A."/>
            <person name="Okamura-Oho Y."/>
            <person name="Suzuki H."/>
            <person name="Kawai J."/>
            <person name="Hayashizaki Y."/>
        </authorList>
    </citation>
    <scope>NUCLEOTIDE SEQUENCE [LARGE SCALE MRNA] (ISOFORM 1)</scope>
    <source>
        <strain>C57BL/6J</strain>
        <tissue>Embryo</tissue>
    </source>
</reference>
<reference key="2">
    <citation type="journal article" date="2009" name="PLoS Biol.">
        <title>Lineage-specific biology revealed by a finished genome assembly of the mouse.</title>
        <authorList>
            <person name="Church D.M."/>
            <person name="Goodstadt L."/>
            <person name="Hillier L.W."/>
            <person name="Zody M.C."/>
            <person name="Goldstein S."/>
            <person name="She X."/>
            <person name="Bult C.J."/>
            <person name="Agarwala R."/>
            <person name="Cherry J.L."/>
            <person name="DiCuccio M."/>
            <person name="Hlavina W."/>
            <person name="Kapustin Y."/>
            <person name="Meric P."/>
            <person name="Maglott D."/>
            <person name="Birtle Z."/>
            <person name="Marques A.C."/>
            <person name="Graves T."/>
            <person name="Zhou S."/>
            <person name="Teague B."/>
            <person name="Potamousis K."/>
            <person name="Churas C."/>
            <person name="Place M."/>
            <person name="Herschleb J."/>
            <person name="Runnheim R."/>
            <person name="Forrest D."/>
            <person name="Amos-Landgraf J."/>
            <person name="Schwartz D.C."/>
            <person name="Cheng Z."/>
            <person name="Lindblad-Toh K."/>
            <person name="Eichler E.E."/>
            <person name="Ponting C.P."/>
        </authorList>
    </citation>
    <scope>NUCLEOTIDE SEQUENCE [LARGE SCALE GENOMIC DNA]</scope>
    <source>
        <strain>C57BL/6J</strain>
    </source>
</reference>
<reference key="3">
    <citation type="journal article" date="2004" name="Genome Res.">
        <title>The status, quality, and expansion of the NIH full-length cDNA project: the Mammalian Gene Collection (MGC).</title>
        <authorList>
            <consortium name="The MGC Project Team"/>
        </authorList>
    </citation>
    <scope>NUCLEOTIDE SEQUENCE [LARGE SCALE MRNA] (ISOFORM 1)</scope>
    <source>
        <strain>FVB/N</strain>
        <tissue>Colon</tissue>
    </source>
</reference>
<reference key="4">
    <citation type="journal article" date="2006" name="J. Proteome Res.">
        <title>Proteome-wide characterization of N-glycosylation events by diagonal chromatography.</title>
        <authorList>
            <person name="Ghesquiere B."/>
            <person name="Van Damme J."/>
            <person name="Martens L."/>
            <person name="Vandekerckhove J."/>
            <person name="Gevaert K."/>
        </authorList>
    </citation>
    <scope>GLYCOSYLATION [LARGE SCALE ANALYSIS] AT ASN-139</scope>
    <source>
        <strain>C57BL/6J</strain>
        <tissue>Plasma</tissue>
    </source>
</reference>
<reference key="5">
    <citation type="journal article" date="2010" name="Cell">
        <title>A tissue-specific atlas of mouse protein phosphorylation and expression.</title>
        <authorList>
            <person name="Huttlin E.L."/>
            <person name="Jedrychowski M.P."/>
            <person name="Elias J.E."/>
            <person name="Goswami T."/>
            <person name="Rad R."/>
            <person name="Beausoleil S.A."/>
            <person name="Villen J."/>
            <person name="Haas W."/>
            <person name="Sowa M.E."/>
            <person name="Gygi S.P."/>
        </authorList>
    </citation>
    <scope>IDENTIFICATION BY MASS SPECTROMETRY [LARGE SCALE ANALYSIS]</scope>
    <source>
        <tissue>Heart</tissue>
        <tissue>Kidney</tissue>
        <tissue>Lung</tissue>
        <tissue>Spleen</tissue>
        <tissue>Testis</tissue>
    </source>
</reference>
<comment type="function">
    <text evidence="1">Could be involved in calcium-dependent cell adhesion or intercellular interactions. May contribute to the elastic fiber assembly and/or maintenance.</text>
</comment>
<comment type="subunit">
    <text evidence="1">Homodimer. Can also form higher oligomers. Interacts with FBN1, FBN2 and LOX. Interacts with COL1A1 in a Ca (2+)-dependent manner. Interacts with ELN in a Ca (2+)-dependent manner; this interaction promotes ELN self-assembly.</text>
</comment>
<comment type="subcellular location">
    <subcellularLocation>
        <location evidence="1">Secreted</location>
        <location evidence="1">Extracellular space</location>
        <location evidence="1">Extracellular matrix</location>
    </subcellularLocation>
</comment>
<comment type="alternative products">
    <event type="alternative splicing"/>
    <isoform>
        <id>Q9D1H9-1</id>
        <name>1</name>
        <sequence type="displayed"/>
    </isoform>
    <isoform>
        <id>Q9D1H9-2</id>
        <name>2</name>
        <sequence type="described" ref="VSP_013482"/>
    </isoform>
</comment>
<sequence>MKALPALPLMLMLLSMPPPCAPQASGIRGDALEKSCLQQPLDCDDIYAQGYQEDGVYLIYPYGPSVPVPVFCDMTTEGGKWTVFQKRFNGSVSFFRGWSDYKLGFGRADGEYWLGLQNLHLLTLKQKYELRVDLEDFENNTAYAKYIDFSISPNAISAEEDGYTLYVAGFEDGGAGDSLSYHSGQKFSTFDRDQDLFVQNCAALSSGAFWFRSCHFANLNGFYLGGSHLSYANGINWAQWKGFYYSLKRTEMKIRRA</sequence>
<dbReference type="EMBL" id="AK003537">
    <property type="protein sequence ID" value="BAB22844.1"/>
    <property type="molecule type" value="mRNA"/>
</dbReference>
<dbReference type="EMBL" id="AL604029">
    <property type="status" value="NOT_ANNOTATED_CDS"/>
    <property type="molecule type" value="Genomic_DNA"/>
</dbReference>
<dbReference type="EMBL" id="BC022666">
    <property type="protein sequence ID" value="AAH22666.1"/>
    <property type="molecule type" value="mRNA"/>
</dbReference>
<dbReference type="CCDS" id="CCDS24813.1">
    <molecule id="Q9D1H9-1"/>
</dbReference>
<dbReference type="CCDS" id="CCDS83820.1">
    <molecule id="Q9D1H9-2"/>
</dbReference>
<dbReference type="RefSeq" id="NP_001334474.1">
    <molecule id="Q9D1H9-2"/>
    <property type="nucleotide sequence ID" value="NM_001347545.1"/>
</dbReference>
<dbReference type="RefSeq" id="NP_083844.1">
    <molecule id="Q9D1H9-1"/>
    <property type="nucleotide sequence ID" value="NM_029568.3"/>
</dbReference>
<dbReference type="SMR" id="Q9D1H9"/>
<dbReference type="BioGRID" id="218063">
    <property type="interactions" value="1"/>
</dbReference>
<dbReference type="FunCoup" id="Q9D1H9">
    <property type="interactions" value="161"/>
</dbReference>
<dbReference type="IntAct" id="Q9D1H9">
    <property type="interactions" value="1"/>
</dbReference>
<dbReference type="STRING" id="10090.ENSMUSP00000038971"/>
<dbReference type="GlyConnect" id="2512">
    <property type="glycosylation" value="1 N-Linked glycan (1 site)"/>
</dbReference>
<dbReference type="GlyCosmos" id="Q9D1H9">
    <property type="glycosylation" value="2 sites, 1 glycan"/>
</dbReference>
<dbReference type="GlyGen" id="Q9D1H9">
    <property type="glycosylation" value="2 sites, 3 N-linked glycans (2 sites)"/>
</dbReference>
<dbReference type="iPTMnet" id="Q9D1H9"/>
<dbReference type="PhosphoSitePlus" id="Q9D1H9"/>
<dbReference type="CPTAC" id="non-CPTAC-3363"/>
<dbReference type="PaxDb" id="10090-ENSMUSP00000070848"/>
<dbReference type="PeptideAtlas" id="Q9D1H9"/>
<dbReference type="ProteomicsDB" id="295560">
    <molecule id="Q9D1H9-1"/>
</dbReference>
<dbReference type="ProteomicsDB" id="295561">
    <molecule id="Q9D1H9-2"/>
</dbReference>
<dbReference type="Antibodypedia" id="25925">
    <property type="antibodies" value="254 antibodies from 27 providers"/>
</dbReference>
<dbReference type="DNASU" id="76293"/>
<dbReference type="Ensembl" id="ENSMUST00000040522.7">
    <molecule id="Q9D1H9-2"/>
    <property type="protein sequence ID" value="ENSMUSP00000038971.7"/>
    <property type="gene ID" value="ENSMUSG00000042436.13"/>
</dbReference>
<dbReference type="Ensembl" id="ENSMUST00000064783.10">
    <molecule id="Q9D1H9-1"/>
    <property type="protein sequence ID" value="ENSMUSP00000070848.4"/>
    <property type="gene ID" value="ENSMUSG00000042436.13"/>
</dbReference>
<dbReference type="GeneID" id="76293"/>
<dbReference type="KEGG" id="mmu:76293"/>
<dbReference type="UCSC" id="uc007jhm.1">
    <molecule id="Q9D1H9-1"/>
    <property type="organism name" value="mouse"/>
</dbReference>
<dbReference type="AGR" id="MGI:1342276"/>
<dbReference type="CTD" id="4239"/>
<dbReference type="MGI" id="MGI:1342276">
    <property type="gene designation" value="Mfap4"/>
</dbReference>
<dbReference type="VEuPathDB" id="HostDB:ENSMUSG00000042436"/>
<dbReference type="eggNOG" id="KOG2579">
    <property type="taxonomic scope" value="Eukaryota"/>
</dbReference>
<dbReference type="GeneTree" id="ENSGT00940000154615"/>
<dbReference type="HOGENOM" id="CLU_038628_6_0_1"/>
<dbReference type="InParanoid" id="Q9D1H9"/>
<dbReference type="OMA" id="QPCGEDS"/>
<dbReference type="OrthoDB" id="13386at9989"/>
<dbReference type="PhylomeDB" id="Q9D1H9"/>
<dbReference type="TreeFam" id="TF336658"/>
<dbReference type="Reactome" id="R-MMU-2129379">
    <property type="pathway name" value="Molecules associated with elastic fibres"/>
</dbReference>
<dbReference type="BioGRID-ORCS" id="76293">
    <property type="hits" value="3 hits in 77 CRISPR screens"/>
</dbReference>
<dbReference type="ChiTaRS" id="Mfap4">
    <property type="organism name" value="mouse"/>
</dbReference>
<dbReference type="PRO" id="PR:Q9D1H9"/>
<dbReference type="Proteomes" id="UP000000589">
    <property type="component" value="Chromosome 11"/>
</dbReference>
<dbReference type="RNAct" id="Q9D1H9">
    <property type="molecule type" value="protein"/>
</dbReference>
<dbReference type="Bgee" id="ENSMUSG00000042436">
    <property type="expression patterns" value="Expressed in left lung lobe and 191 other cell types or tissues"/>
</dbReference>
<dbReference type="GO" id="GO:0062023">
    <property type="term" value="C:collagen-containing extracellular matrix"/>
    <property type="evidence" value="ECO:0007005"/>
    <property type="project" value="BHF-UCL"/>
</dbReference>
<dbReference type="GO" id="GO:0071953">
    <property type="term" value="C:elastic fiber"/>
    <property type="evidence" value="ECO:0007669"/>
    <property type="project" value="Ensembl"/>
</dbReference>
<dbReference type="GO" id="GO:0005576">
    <property type="term" value="C:extracellular region"/>
    <property type="evidence" value="ECO:0007669"/>
    <property type="project" value="UniProtKB-KW"/>
</dbReference>
<dbReference type="GO" id="GO:0001527">
    <property type="term" value="C:microfibril"/>
    <property type="evidence" value="ECO:0007669"/>
    <property type="project" value="Ensembl"/>
</dbReference>
<dbReference type="GO" id="GO:0007155">
    <property type="term" value="P:cell adhesion"/>
    <property type="evidence" value="ECO:0007669"/>
    <property type="project" value="UniProtKB-KW"/>
</dbReference>
<dbReference type="GO" id="GO:0071493">
    <property type="term" value="P:cellular response to UV-B"/>
    <property type="evidence" value="ECO:0007669"/>
    <property type="project" value="Ensembl"/>
</dbReference>
<dbReference type="GO" id="GO:0048251">
    <property type="term" value="P:elastic fiber assembly"/>
    <property type="evidence" value="ECO:0007669"/>
    <property type="project" value="Ensembl"/>
</dbReference>
<dbReference type="GO" id="GO:0010712">
    <property type="term" value="P:regulation of collagen metabolic process"/>
    <property type="evidence" value="ECO:0007669"/>
    <property type="project" value="Ensembl"/>
</dbReference>
<dbReference type="GO" id="GO:0009650">
    <property type="term" value="P:UV protection"/>
    <property type="evidence" value="ECO:0007669"/>
    <property type="project" value="Ensembl"/>
</dbReference>
<dbReference type="CDD" id="cd00087">
    <property type="entry name" value="FReD"/>
    <property type="match status" value="1"/>
</dbReference>
<dbReference type="FunFam" id="3.90.215.10:FF:000004">
    <property type="entry name" value="microfibril-associated glycoprotein 4"/>
    <property type="match status" value="1"/>
</dbReference>
<dbReference type="Gene3D" id="3.90.215.10">
    <property type="entry name" value="Gamma Fibrinogen, chain A, domain 1"/>
    <property type="match status" value="1"/>
</dbReference>
<dbReference type="InterPro" id="IPR036056">
    <property type="entry name" value="Fibrinogen-like_C"/>
</dbReference>
<dbReference type="InterPro" id="IPR014716">
    <property type="entry name" value="Fibrinogen_a/b/g_C_1"/>
</dbReference>
<dbReference type="InterPro" id="IPR002181">
    <property type="entry name" value="Fibrinogen_a/b/g_C_dom"/>
</dbReference>
<dbReference type="InterPro" id="IPR050373">
    <property type="entry name" value="Fibrinogen_C-term_domain"/>
</dbReference>
<dbReference type="NCBIfam" id="NF040941">
    <property type="entry name" value="GGGWT_bact"/>
    <property type="match status" value="1"/>
</dbReference>
<dbReference type="PANTHER" id="PTHR19143">
    <property type="entry name" value="FIBRINOGEN/TENASCIN/ANGIOPOEITIN"/>
    <property type="match status" value="1"/>
</dbReference>
<dbReference type="PANTHER" id="PTHR19143:SF225">
    <property type="entry name" value="MICROFIBRIL-ASSOCIATED GLYCOPROTEIN 4"/>
    <property type="match status" value="1"/>
</dbReference>
<dbReference type="Pfam" id="PF00147">
    <property type="entry name" value="Fibrinogen_C"/>
    <property type="match status" value="1"/>
</dbReference>
<dbReference type="SMART" id="SM00186">
    <property type="entry name" value="FBG"/>
    <property type="match status" value="1"/>
</dbReference>
<dbReference type="SUPFAM" id="SSF56496">
    <property type="entry name" value="Fibrinogen C-terminal domain-like"/>
    <property type="match status" value="1"/>
</dbReference>
<dbReference type="PROSITE" id="PS51406">
    <property type="entry name" value="FIBRINOGEN_C_2"/>
    <property type="match status" value="1"/>
</dbReference>
<keyword id="KW-0025">Alternative splicing</keyword>
<keyword id="KW-0106">Calcium</keyword>
<keyword id="KW-0130">Cell adhesion</keyword>
<keyword id="KW-0272">Extracellular matrix</keyword>
<keyword id="KW-0325">Glycoprotein</keyword>
<keyword id="KW-1185">Reference proteome</keyword>
<keyword id="KW-0964">Secreted</keyword>
<keyword id="KW-0732">Signal</keyword>
<evidence type="ECO:0000250" key="1">
    <source>
        <dbReference type="UniProtKB" id="P55083"/>
    </source>
</evidence>
<evidence type="ECO:0000255" key="2"/>
<evidence type="ECO:0000255" key="3">
    <source>
        <dbReference type="PROSITE-ProRule" id="PRU00739"/>
    </source>
</evidence>
<evidence type="ECO:0000269" key="4">
    <source>
    </source>
</evidence>
<evidence type="ECO:0000305" key="5"/>